<sequence>MPEFELYVEDRQVVTPGELLARGQVIASEGTYTSGDEVYSKVTGLVDIDGRRIRVIPLAGPYRPSPGDFVVGIVEEVKFSSWLIDVRAPLPAILHVSNALEEEVDLIETDLSRYYRPGDVITAVVREVDPVQRVELSLLEDDAPTRLGRLQGGQVVEIDPVKVPRVIGRKGSMIKMLKRVLGCDIVVGANGRIYVRAREEPKKERELLAVRAIREIERRSHLRGLTDWLKANLKRLSRW</sequence>
<gene>
    <name evidence="1" type="primary">rrp4</name>
    <name type="ordered locus">MK0382</name>
</gene>
<organism>
    <name type="scientific">Methanopyrus kandleri (strain AV19 / DSM 6324 / JCM 9639 / NBRC 100938)</name>
    <dbReference type="NCBI Taxonomy" id="190192"/>
    <lineage>
        <taxon>Archaea</taxon>
        <taxon>Methanobacteriati</taxon>
        <taxon>Methanobacteriota</taxon>
        <taxon>Methanomada group</taxon>
        <taxon>Methanopyri</taxon>
        <taxon>Methanopyrales</taxon>
        <taxon>Methanopyraceae</taxon>
        <taxon>Methanopyrus</taxon>
    </lineage>
</organism>
<comment type="function">
    <text evidence="1">Non-catalytic component of the exosome, which is a complex involved in RNA degradation. Increases the RNA binding and the efficiency of RNA degradation. Confers strong poly(A) specificity to the exosome.</text>
</comment>
<comment type="subunit">
    <text evidence="1">Component of the archaeal exosome complex. Forms a trimer of Rrp4 and/or Csl4 subunits. The trimer associates with a hexameric ring-like arrangement composed of 3 Rrp41-Rrp42 heterodimers.</text>
</comment>
<comment type="subcellular location">
    <subcellularLocation>
        <location evidence="1">Cytoplasm</location>
    </subcellularLocation>
</comment>
<comment type="similarity">
    <text evidence="1">Belongs to the RRP4 family.</text>
</comment>
<feature type="chain" id="PRO_0000050147" description="Exosome complex component Rrp4">
    <location>
        <begin position="1"/>
        <end position="239"/>
    </location>
</feature>
<feature type="domain" description="S1 motif" evidence="1">
    <location>
        <begin position="67"/>
        <end position="139"/>
    </location>
</feature>
<feature type="domain" description="KH" evidence="1">
    <location>
        <begin position="151"/>
        <end position="217"/>
    </location>
</feature>
<protein>
    <recommendedName>
        <fullName evidence="1">Exosome complex component Rrp4</fullName>
    </recommendedName>
</protein>
<name>RRP4_METKA</name>
<reference key="1">
    <citation type="journal article" date="2002" name="Proc. Natl. Acad. Sci. U.S.A.">
        <title>The complete genome of hyperthermophile Methanopyrus kandleri AV19 and monophyly of archaeal methanogens.</title>
        <authorList>
            <person name="Slesarev A.I."/>
            <person name="Mezhevaya K.V."/>
            <person name="Makarova K.S."/>
            <person name="Polushin N.N."/>
            <person name="Shcherbinina O.V."/>
            <person name="Shakhova V.V."/>
            <person name="Belova G.I."/>
            <person name="Aravind L."/>
            <person name="Natale D.A."/>
            <person name="Rogozin I.B."/>
            <person name="Tatusov R.L."/>
            <person name="Wolf Y.I."/>
            <person name="Stetter K.O."/>
            <person name="Malykh A.G."/>
            <person name="Koonin E.V."/>
            <person name="Kozyavkin S.A."/>
        </authorList>
    </citation>
    <scope>NUCLEOTIDE SEQUENCE [LARGE SCALE GENOMIC DNA]</scope>
    <source>
        <strain>AV19 / DSM 6324 / JCM 9639 / NBRC 100938</strain>
    </source>
</reference>
<dbReference type="EMBL" id="AE009439">
    <property type="protein sequence ID" value="AAM01597.1"/>
    <property type="molecule type" value="Genomic_DNA"/>
</dbReference>
<dbReference type="RefSeq" id="WP_011018752.1">
    <property type="nucleotide sequence ID" value="NC_003551.1"/>
</dbReference>
<dbReference type="SMR" id="Q8TYC0"/>
<dbReference type="STRING" id="190192.MK0382"/>
<dbReference type="PaxDb" id="190192-MK0382"/>
<dbReference type="EnsemblBacteria" id="AAM01597">
    <property type="protein sequence ID" value="AAM01597"/>
    <property type="gene ID" value="MK0382"/>
</dbReference>
<dbReference type="GeneID" id="1477685"/>
<dbReference type="KEGG" id="mka:MK0382"/>
<dbReference type="HOGENOM" id="CLU_071769_0_0_2"/>
<dbReference type="InParanoid" id="Q8TYC0"/>
<dbReference type="OrthoDB" id="35160at2157"/>
<dbReference type="Proteomes" id="UP000001826">
    <property type="component" value="Chromosome"/>
</dbReference>
<dbReference type="GO" id="GO:0005737">
    <property type="term" value="C:cytoplasm"/>
    <property type="evidence" value="ECO:0007669"/>
    <property type="project" value="UniProtKB-SubCell"/>
</dbReference>
<dbReference type="GO" id="GO:0000178">
    <property type="term" value="C:exosome (RNase complex)"/>
    <property type="evidence" value="ECO:0007669"/>
    <property type="project" value="UniProtKB-KW"/>
</dbReference>
<dbReference type="GO" id="GO:0008143">
    <property type="term" value="F:poly(A) binding"/>
    <property type="evidence" value="ECO:0007669"/>
    <property type="project" value="InterPro"/>
</dbReference>
<dbReference type="GO" id="GO:0071034">
    <property type="term" value="P:CUT catabolic process"/>
    <property type="evidence" value="ECO:0007669"/>
    <property type="project" value="TreeGrafter"/>
</dbReference>
<dbReference type="GO" id="GO:0000467">
    <property type="term" value="P:exonucleolytic trimming to generate mature 3'-end of 5.8S rRNA from tricistronic rRNA transcript (SSU-rRNA, 5.8S rRNA, LSU-rRNA)"/>
    <property type="evidence" value="ECO:0007669"/>
    <property type="project" value="TreeGrafter"/>
</dbReference>
<dbReference type="GO" id="GO:0071051">
    <property type="term" value="P:poly(A)-dependent snoRNA 3'-end processing"/>
    <property type="evidence" value="ECO:0007669"/>
    <property type="project" value="TreeGrafter"/>
</dbReference>
<dbReference type="GO" id="GO:0006401">
    <property type="term" value="P:RNA catabolic process"/>
    <property type="evidence" value="ECO:0007669"/>
    <property type="project" value="UniProtKB-UniRule"/>
</dbReference>
<dbReference type="GO" id="GO:0034475">
    <property type="term" value="P:U4 snRNA 3'-end processing"/>
    <property type="evidence" value="ECO:0007669"/>
    <property type="project" value="TreeGrafter"/>
</dbReference>
<dbReference type="CDD" id="cd22524">
    <property type="entry name" value="KH-I_Rrp4_prokar"/>
    <property type="match status" value="1"/>
</dbReference>
<dbReference type="CDD" id="cd05789">
    <property type="entry name" value="S1_Rrp4"/>
    <property type="match status" value="1"/>
</dbReference>
<dbReference type="Gene3D" id="2.40.50.100">
    <property type="match status" value="1"/>
</dbReference>
<dbReference type="Gene3D" id="3.30.1370.10">
    <property type="entry name" value="K Homology domain, type 1"/>
    <property type="match status" value="1"/>
</dbReference>
<dbReference type="Gene3D" id="2.40.50.140">
    <property type="entry name" value="Nucleic acid-binding proteins"/>
    <property type="match status" value="1"/>
</dbReference>
<dbReference type="HAMAP" id="MF_00623">
    <property type="entry name" value="Exosome_Rrp4"/>
    <property type="match status" value="1"/>
</dbReference>
<dbReference type="InterPro" id="IPR026699">
    <property type="entry name" value="Exosome_RNA_bind1/RRP40/RRP4"/>
</dbReference>
<dbReference type="InterPro" id="IPR004087">
    <property type="entry name" value="KH_dom"/>
</dbReference>
<dbReference type="InterPro" id="IPR004088">
    <property type="entry name" value="KH_dom_type_1"/>
</dbReference>
<dbReference type="InterPro" id="IPR036612">
    <property type="entry name" value="KH_dom_type_1_sf"/>
</dbReference>
<dbReference type="InterPro" id="IPR012340">
    <property type="entry name" value="NA-bd_OB-fold"/>
</dbReference>
<dbReference type="InterPro" id="IPR023474">
    <property type="entry name" value="Rrp4"/>
</dbReference>
<dbReference type="InterPro" id="IPR054371">
    <property type="entry name" value="RRP4_N"/>
</dbReference>
<dbReference type="InterPro" id="IPR048565">
    <property type="entry name" value="RRP4_S1"/>
</dbReference>
<dbReference type="InterPro" id="IPR003029">
    <property type="entry name" value="S1_domain"/>
</dbReference>
<dbReference type="NCBIfam" id="NF003181">
    <property type="entry name" value="PRK04163.1-1"/>
    <property type="match status" value="1"/>
</dbReference>
<dbReference type="PANTHER" id="PTHR21321:SF4">
    <property type="entry name" value="EXOSOME COMPLEX COMPONENT RRP4"/>
    <property type="match status" value="1"/>
</dbReference>
<dbReference type="PANTHER" id="PTHR21321">
    <property type="entry name" value="PNAS-3 RELATED"/>
    <property type="match status" value="1"/>
</dbReference>
<dbReference type="Pfam" id="PF22625">
    <property type="entry name" value="ECR1_N_2"/>
    <property type="match status" value="1"/>
</dbReference>
<dbReference type="Pfam" id="PF15985">
    <property type="entry name" value="KH_6"/>
    <property type="match status" value="1"/>
</dbReference>
<dbReference type="Pfam" id="PF21266">
    <property type="entry name" value="RRP4_S1"/>
    <property type="match status" value="1"/>
</dbReference>
<dbReference type="SMART" id="SM00322">
    <property type="entry name" value="KH"/>
    <property type="match status" value="1"/>
</dbReference>
<dbReference type="SMART" id="SM00316">
    <property type="entry name" value="S1"/>
    <property type="match status" value="1"/>
</dbReference>
<dbReference type="SUPFAM" id="SSF54791">
    <property type="entry name" value="Eukaryotic type KH-domain (KH-domain type I)"/>
    <property type="match status" value="1"/>
</dbReference>
<dbReference type="SUPFAM" id="SSF50249">
    <property type="entry name" value="Nucleic acid-binding proteins"/>
    <property type="match status" value="1"/>
</dbReference>
<dbReference type="SUPFAM" id="SSF110324">
    <property type="entry name" value="Ribosomal L27 protein-like"/>
    <property type="match status" value="1"/>
</dbReference>
<dbReference type="PROSITE" id="PS50126">
    <property type="entry name" value="S1"/>
    <property type="match status" value="1"/>
</dbReference>
<accession>Q8TYC0</accession>
<keyword id="KW-0963">Cytoplasm</keyword>
<keyword id="KW-0271">Exosome</keyword>
<keyword id="KW-1185">Reference proteome</keyword>
<keyword id="KW-0694">RNA-binding</keyword>
<evidence type="ECO:0000255" key="1">
    <source>
        <dbReference type="HAMAP-Rule" id="MF_00623"/>
    </source>
</evidence>
<proteinExistence type="inferred from homology"/>